<reference key="1">
    <citation type="journal article" date="2011" name="PLoS Genet.">
        <title>Genomic analysis of the necrotrophic fungal pathogens Sclerotinia sclerotiorum and Botrytis cinerea.</title>
        <authorList>
            <person name="Amselem J."/>
            <person name="Cuomo C.A."/>
            <person name="van Kan J.A.L."/>
            <person name="Viaud M."/>
            <person name="Benito E.P."/>
            <person name="Couloux A."/>
            <person name="Coutinho P.M."/>
            <person name="de Vries R.P."/>
            <person name="Dyer P.S."/>
            <person name="Fillinger S."/>
            <person name="Fournier E."/>
            <person name="Gout L."/>
            <person name="Hahn M."/>
            <person name="Kohn L."/>
            <person name="Lapalu N."/>
            <person name="Plummer K.M."/>
            <person name="Pradier J.-M."/>
            <person name="Quevillon E."/>
            <person name="Sharon A."/>
            <person name="Simon A."/>
            <person name="ten Have A."/>
            <person name="Tudzynski B."/>
            <person name="Tudzynski P."/>
            <person name="Wincker P."/>
            <person name="Andrew M."/>
            <person name="Anthouard V."/>
            <person name="Beever R.E."/>
            <person name="Beffa R."/>
            <person name="Benoit I."/>
            <person name="Bouzid O."/>
            <person name="Brault B."/>
            <person name="Chen Z."/>
            <person name="Choquer M."/>
            <person name="Collemare J."/>
            <person name="Cotton P."/>
            <person name="Danchin E.G."/>
            <person name="Da Silva C."/>
            <person name="Gautier A."/>
            <person name="Giraud C."/>
            <person name="Giraud T."/>
            <person name="Gonzalez C."/>
            <person name="Grossetete S."/>
            <person name="Gueldener U."/>
            <person name="Henrissat B."/>
            <person name="Howlett B.J."/>
            <person name="Kodira C."/>
            <person name="Kretschmer M."/>
            <person name="Lappartient A."/>
            <person name="Leroch M."/>
            <person name="Levis C."/>
            <person name="Mauceli E."/>
            <person name="Neuveglise C."/>
            <person name="Oeser B."/>
            <person name="Pearson M."/>
            <person name="Poulain J."/>
            <person name="Poussereau N."/>
            <person name="Quesneville H."/>
            <person name="Rascle C."/>
            <person name="Schumacher J."/>
            <person name="Segurens B."/>
            <person name="Sexton A."/>
            <person name="Silva E."/>
            <person name="Sirven C."/>
            <person name="Soanes D.M."/>
            <person name="Talbot N.J."/>
            <person name="Templeton M."/>
            <person name="Yandava C."/>
            <person name="Yarden O."/>
            <person name="Zeng Q."/>
            <person name="Rollins J.A."/>
            <person name="Lebrun M.-H."/>
            <person name="Dickman M."/>
        </authorList>
    </citation>
    <scope>NUCLEOTIDE SEQUENCE [LARGE SCALE GENOMIC DNA]</scope>
    <source>
        <strain>ATCC 18683 / 1980 / Ss-1</strain>
    </source>
</reference>
<accession>A7E7N7</accession>
<protein>
    <recommendedName>
        <fullName>Actin cytoskeleton-regulatory complex protein end3</fullName>
    </recommendedName>
    <alternativeName>
        <fullName>Endocytosis protein 3</fullName>
    </alternativeName>
</protein>
<feature type="chain" id="PRO_0000349458" description="Actin cytoskeleton-regulatory complex protein end3">
    <location>
        <begin position="1"/>
        <end position="400"/>
    </location>
</feature>
<feature type="domain" description="EH 1" evidence="3">
    <location>
        <begin position="10"/>
        <end position="100"/>
    </location>
</feature>
<feature type="domain" description="EF-hand" evidence="4">
    <location>
        <begin position="42"/>
        <end position="77"/>
    </location>
</feature>
<feature type="domain" description="EH 2" evidence="3">
    <location>
        <begin position="139"/>
        <end position="223"/>
    </location>
</feature>
<feature type="coiled-coil region" evidence="2">
    <location>
        <begin position="286"/>
        <end position="400"/>
    </location>
</feature>
<feature type="binding site" evidence="4">
    <location>
        <position position="55"/>
    </location>
    <ligand>
        <name>Ca(2+)</name>
        <dbReference type="ChEBI" id="CHEBI:29108"/>
    </ligand>
</feature>
<feature type="binding site" evidence="4">
    <location>
        <position position="57"/>
    </location>
    <ligand>
        <name>Ca(2+)</name>
        <dbReference type="ChEBI" id="CHEBI:29108"/>
    </ligand>
</feature>
<feature type="binding site" evidence="4">
    <location>
        <position position="59"/>
    </location>
    <ligand>
        <name>Ca(2+)</name>
        <dbReference type="ChEBI" id="CHEBI:29108"/>
    </ligand>
</feature>
<feature type="binding site" evidence="4">
    <location>
        <position position="61"/>
    </location>
    <ligand>
        <name>Ca(2+)</name>
        <dbReference type="ChEBI" id="CHEBI:29108"/>
    </ligand>
</feature>
<feature type="binding site" evidence="4">
    <location>
        <position position="66"/>
    </location>
    <ligand>
        <name>Ca(2+)</name>
        <dbReference type="ChEBI" id="CHEBI:29108"/>
    </ligand>
</feature>
<evidence type="ECO:0000250" key="1"/>
<evidence type="ECO:0000255" key="2"/>
<evidence type="ECO:0000255" key="3">
    <source>
        <dbReference type="PROSITE-ProRule" id="PRU00077"/>
    </source>
</evidence>
<evidence type="ECO:0000255" key="4">
    <source>
        <dbReference type="PROSITE-ProRule" id="PRU00448"/>
    </source>
</evidence>
<evidence type="ECO:0000305" key="5"/>
<comment type="function">
    <text evidence="1">Component of the PAN1 actin cytoskeleton-regulatory complex required for the internalization of endosomes during actin-coupled endocytosis. The complex links the site of endocytosis to the cell membrane-associated actin cytoskeleton. Mediates uptake of external molecules and vacuolar degradation of plasma membrane proteins. Plays a role in the proper organization of the cell membrane-associated actin cytoskeleton and promotes its destabilization (By similarity).</text>
</comment>
<comment type="subunit">
    <text evidence="1">Component of the PAN1 actin cytoskeleton-regulatory complex.</text>
</comment>
<comment type="subcellular location">
    <subcellularLocation>
        <location evidence="1">Cell membrane</location>
        <topology evidence="1">Peripheral membrane protein</topology>
        <orientation evidence="1">Cytoplasmic side</orientation>
    </subcellularLocation>
    <subcellularLocation>
        <location evidence="1">Endosome membrane</location>
        <topology evidence="1">Peripheral membrane protein</topology>
        <orientation evidence="1">Cytoplasmic side</orientation>
    </subcellularLocation>
    <subcellularLocation>
        <location evidence="1">Cytoplasm</location>
        <location evidence="1">Cytoskeleton</location>
        <location evidence="1">Actin patch</location>
    </subcellularLocation>
    <text evidence="1">Cytoplasmic and cortical actin patches.</text>
</comment>
<comment type="similarity">
    <text evidence="5">Belongs to the END3 family.</text>
</comment>
<gene>
    <name type="primary">end3</name>
    <name type="ORF">SS1G_01315</name>
</gene>
<dbReference type="EMBL" id="CH476622">
    <property type="protein sequence ID" value="EDN96389.1"/>
    <property type="molecule type" value="Genomic_DNA"/>
</dbReference>
<dbReference type="RefSeq" id="XP_001597121.1">
    <property type="nucleotide sequence ID" value="XM_001597071.1"/>
</dbReference>
<dbReference type="FunCoup" id="A7E7N7">
    <property type="interactions" value="95"/>
</dbReference>
<dbReference type="STRING" id="665079.A7E7N7"/>
<dbReference type="EnsemblFungi" id="EDN96389">
    <property type="protein sequence ID" value="EDN96389"/>
    <property type="gene ID" value="SS1G_01315"/>
</dbReference>
<dbReference type="GeneID" id="5494044"/>
<dbReference type="KEGG" id="ssl:SS1G_01315"/>
<dbReference type="VEuPathDB" id="FungiDB:sscle_01g009740"/>
<dbReference type="eggNOG" id="KOG0998">
    <property type="taxonomic scope" value="Eukaryota"/>
</dbReference>
<dbReference type="HOGENOM" id="CLU_040829_0_0_1"/>
<dbReference type="InParanoid" id="A7E7N7"/>
<dbReference type="OMA" id="DWLIPES"/>
<dbReference type="OrthoDB" id="1716625at2759"/>
<dbReference type="Proteomes" id="UP000001312">
    <property type="component" value="Unassembled WGS sequence"/>
</dbReference>
<dbReference type="GO" id="GO:0030479">
    <property type="term" value="C:actin cortical patch"/>
    <property type="evidence" value="ECO:0007669"/>
    <property type="project" value="UniProtKB-SubCell"/>
</dbReference>
<dbReference type="GO" id="GO:0005737">
    <property type="term" value="C:cytoplasm"/>
    <property type="evidence" value="ECO:0000318"/>
    <property type="project" value="GO_Central"/>
</dbReference>
<dbReference type="GO" id="GO:0010008">
    <property type="term" value="C:endosome membrane"/>
    <property type="evidence" value="ECO:0007669"/>
    <property type="project" value="UniProtKB-SubCell"/>
</dbReference>
<dbReference type="GO" id="GO:0005886">
    <property type="term" value="C:plasma membrane"/>
    <property type="evidence" value="ECO:0000318"/>
    <property type="project" value="GO_Central"/>
</dbReference>
<dbReference type="GO" id="GO:0003779">
    <property type="term" value="F:actin binding"/>
    <property type="evidence" value="ECO:0007669"/>
    <property type="project" value="UniProtKB-KW"/>
</dbReference>
<dbReference type="GO" id="GO:0005509">
    <property type="term" value="F:calcium ion binding"/>
    <property type="evidence" value="ECO:0007669"/>
    <property type="project" value="InterPro"/>
</dbReference>
<dbReference type="GO" id="GO:0007015">
    <property type="term" value="P:actin filament organization"/>
    <property type="evidence" value="ECO:0007669"/>
    <property type="project" value="InterPro"/>
</dbReference>
<dbReference type="GO" id="GO:0006897">
    <property type="term" value="P:endocytosis"/>
    <property type="evidence" value="ECO:0000318"/>
    <property type="project" value="GO_Central"/>
</dbReference>
<dbReference type="GO" id="GO:0016197">
    <property type="term" value="P:endosomal transport"/>
    <property type="evidence" value="ECO:0000318"/>
    <property type="project" value="GO_Central"/>
</dbReference>
<dbReference type="CDD" id="cd00052">
    <property type="entry name" value="EH"/>
    <property type="match status" value="1"/>
</dbReference>
<dbReference type="FunFam" id="1.10.238.10:FF:000339">
    <property type="entry name" value="Actin cytoskeleton-regulatory complex protein END3"/>
    <property type="match status" value="1"/>
</dbReference>
<dbReference type="Gene3D" id="1.10.238.10">
    <property type="entry name" value="EF-hand"/>
    <property type="match status" value="2"/>
</dbReference>
<dbReference type="InterPro" id="IPR011992">
    <property type="entry name" value="EF-hand-dom_pair"/>
</dbReference>
<dbReference type="InterPro" id="IPR018247">
    <property type="entry name" value="EF_Hand_1_Ca_BS"/>
</dbReference>
<dbReference type="InterPro" id="IPR002048">
    <property type="entry name" value="EF_hand_dom"/>
</dbReference>
<dbReference type="InterPro" id="IPR000261">
    <property type="entry name" value="EH_dom"/>
</dbReference>
<dbReference type="InterPro" id="IPR025604">
    <property type="entry name" value="End3"/>
</dbReference>
<dbReference type="PANTHER" id="PTHR11216">
    <property type="entry name" value="EH DOMAIN"/>
    <property type="match status" value="1"/>
</dbReference>
<dbReference type="Pfam" id="PF12763">
    <property type="entry name" value="EH"/>
    <property type="match status" value="1"/>
</dbReference>
<dbReference type="Pfam" id="PF12761">
    <property type="entry name" value="End3"/>
    <property type="match status" value="1"/>
</dbReference>
<dbReference type="SMART" id="SM00054">
    <property type="entry name" value="EFh"/>
    <property type="match status" value="1"/>
</dbReference>
<dbReference type="SMART" id="SM00027">
    <property type="entry name" value="EH"/>
    <property type="match status" value="2"/>
</dbReference>
<dbReference type="SUPFAM" id="SSF47473">
    <property type="entry name" value="EF-hand"/>
    <property type="match status" value="2"/>
</dbReference>
<dbReference type="PROSITE" id="PS00018">
    <property type="entry name" value="EF_HAND_1"/>
    <property type="match status" value="1"/>
</dbReference>
<dbReference type="PROSITE" id="PS50222">
    <property type="entry name" value="EF_HAND_2"/>
    <property type="match status" value="1"/>
</dbReference>
<dbReference type="PROSITE" id="PS50031">
    <property type="entry name" value="EH"/>
    <property type="match status" value="2"/>
</dbReference>
<organism>
    <name type="scientific">Sclerotinia sclerotiorum (strain ATCC 18683 / 1980 / Ss-1)</name>
    <name type="common">White mold</name>
    <name type="synonym">Whetzelinia sclerotiorum</name>
    <dbReference type="NCBI Taxonomy" id="665079"/>
    <lineage>
        <taxon>Eukaryota</taxon>
        <taxon>Fungi</taxon>
        <taxon>Dikarya</taxon>
        <taxon>Ascomycota</taxon>
        <taxon>Pezizomycotina</taxon>
        <taxon>Leotiomycetes</taxon>
        <taxon>Helotiales</taxon>
        <taxon>Sclerotiniaceae</taxon>
        <taxon>Sclerotinia</taxon>
    </lineage>
</organism>
<name>END3_SCLS1</name>
<keyword id="KW-0009">Actin-binding</keyword>
<keyword id="KW-0106">Calcium</keyword>
<keyword id="KW-1003">Cell membrane</keyword>
<keyword id="KW-0175">Coiled coil</keyword>
<keyword id="KW-0963">Cytoplasm</keyword>
<keyword id="KW-0206">Cytoskeleton</keyword>
<keyword id="KW-0254">Endocytosis</keyword>
<keyword id="KW-0967">Endosome</keyword>
<keyword id="KW-0472">Membrane</keyword>
<keyword id="KW-0479">Metal-binding</keyword>
<keyword id="KW-1185">Reference proteome</keyword>
<keyword id="KW-0677">Repeat</keyword>
<proteinExistence type="inferred from homology"/>
<sequence>MSNKRIEQSEIEKYWEIFASLSNGGTHLTGAQAAPVLKNSQLRDDQLERIWDLADVDNDGNLDFEEFCVAMRLIFDLVNGEYADVPPALPDWLVPESKAHLVQASRALTGRQVQFERVEDDDDTPGLKDGFDWYMSPSDKSKYEEIYAANRDGRGDITYTLYSSLDVPDTDVRSAWNLINPSAAPAISKDATLAFLHILNNRHEGYRIPRTVPPSLRASFERNQIDYQLDNQRVASPAQKWGVTGGEETSTGRKAKFGETYMSRLGLGGKSSYRPAGTDFSGTKTTEDWEEVRLKKQLAELEAKIEKVEAAAAARSGGRRDTKPALVKRELEQLLDYKRRELRDLESGEGRSKVGASLKGVADEIATVREQVDGLEAHLRSREQVLEELKQEIENEKISR</sequence>